<gene>
    <name evidence="1" type="primary">rpsT</name>
    <name type="ordered locus">BCc_094</name>
</gene>
<accession>Q057X8</accession>
<sequence>MANIKSSKKHISISEKRRKYNCSKRSMIKTFMKKVLFFIKEKNRIKAIKFFYIFQSLVDRYSLKKIIHINKASRYKSVLMNNIKKI</sequence>
<feature type="chain" id="PRO_1000126408" description="Small ribosomal subunit protein bS20">
    <location>
        <begin position="1"/>
        <end position="86"/>
    </location>
</feature>
<keyword id="KW-1185">Reference proteome</keyword>
<keyword id="KW-0687">Ribonucleoprotein</keyword>
<keyword id="KW-0689">Ribosomal protein</keyword>
<keyword id="KW-0694">RNA-binding</keyword>
<keyword id="KW-0699">rRNA-binding</keyword>
<protein>
    <recommendedName>
        <fullName evidence="1">Small ribosomal subunit protein bS20</fullName>
    </recommendedName>
    <alternativeName>
        <fullName evidence="2">30S ribosomal protein S20</fullName>
    </alternativeName>
</protein>
<name>RS20_BUCCC</name>
<organism>
    <name type="scientific">Buchnera aphidicola subsp. Cinara cedri (strain Cc)</name>
    <dbReference type="NCBI Taxonomy" id="372461"/>
    <lineage>
        <taxon>Bacteria</taxon>
        <taxon>Pseudomonadati</taxon>
        <taxon>Pseudomonadota</taxon>
        <taxon>Gammaproteobacteria</taxon>
        <taxon>Enterobacterales</taxon>
        <taxon>Erwiniaceae</taxon>
        <taxon>Buchnera</taxon>
    </lineage>
</organism>
<comment type="function">
    <text evidence="1">Binds directly to 16S ribosomal RNA.</text>
</comment>
<comment type="similarity">
    <text evidence="1">Belongs to the bacterial ribosomal protein bS20 family.</text>
</comment>
<dbReference type="EMBL" id="CP000263">
    <property type="protein sequence ID" value="ABJ90571.1"/>
    <property type="molecule type" value="Genomic_DNA"/>
</dbReference>
<dbReference type="RefSeq" id="WP_011672490.1">
    <property type="nucleotide sequence ID" value="NC_008513.1"/>
</dbReference>
<dbReference type="SMR" id="Q057X8"/>
<dbReference type="STRING" id="372461.BCc_094"/>
<dbReference type="KEGG" id="bcc:BCc_094"/>
<dbReference type="eggNOG" id="COG0268">
    <property type="taxonomic scope" value="Bacteria"/>
</dbReference>
<dbReference type="HOGENOM" id="CLU_160655_4_0_6"/>
<dbReference type="OrthoDB" id="9807974at2"/>
<dbReference type="Proteomes" id="UP000000669">
    <property type="component" value="Chromosome"/>
</dbReference>
<dbReference type="GO" id="GO:0005829">
    <property type="term" value="C:cytosol"/>
    <property type="evidence" value="ECO:0007669"/>
    <property type="project" value="TreeGrafter"/>
</dbReference>
<dbReference type="GO" id="GO:0015935">
    <property type="term" value="C:small ribosomal subunit"/>
    <property type="evidence" value="ECO:0007669"/>
    <property type="project" value="TreeGrafter"/>
</dbReference>
<dbReference type="GO" id="GO:0070181">
    <property type="term" value="F:small ribosomal subunit rRNA binding"/>
    <property type="evidence" value="ECO:0007669"/>
    <property type="project" value="TreeGrafter"/>
</dbReference>
<dbReference type="GO" id="GO:0003735">
    <property type="term" value="F:structural constituent of ribosome"/>
    <property type="evidence" value="ECO:0007669"/>
    <property type="project" value="InterPro"/>
</dbReference>
<dbReference type="GO" id="GO:0006412">
    <property type="term" value="P:translation"/>
    <property type="evidence" value="ECO:0007669"/>
    <property type="project" value="UniProtKB-UniRule"/>
</dbReference>
<dbReference type="Gene3D" id="1.20.58.110">
    <property type="entry name" value="Ribosomal protein S20"/>
    <property type="match status" value="1"/>
</dbReference>
<dbReference type="HAMAP" id="MF_00500">
    <property type="entry name" value="Ribosomal_bS20"/>
    <property type="match status" value="1"/>
</dbReference>
<dbReference type="InterPro" id="IPR002583">
    <property type="entry name" value="Ribosomal_bS20"/>
</dbReference>
<dbReference type="InterPro" id="IPR036510">
    <property type="entry name" value="Ribosomal_bS20_sf"/>
</dbReference>
<dbReference type="NCBIfam" id="TIGR00029">
    <property type="entry name" value="S20"/>
    <property type="match status" value="1"/>
</dbReference>
<dbReference type="PANTHER" id="PTHR33398">
    <property type="entry name" value="30S RIBOSOMAL PROTEIN S20"/>
    <property type="match status" value="1"/>
</dbReference>
<dbReference type="PANTHER" id="PTHR33398:SF1">
    <property type="entry name" value="SMALL RIBOSOMAL SUBUNIT PROTEIN BS20C"/>
    <property type="match status" value="1"/>
</dbReference>
<dbReference type="Pfam" id="PF01649">
    <property type="entry name" value="Ribosomal_S20p"/>
    <property type="match status" value="1"/>
</dbReference>
<dbReference type="SUPFAM" id="SSF46992">
    <property type="entry name" value="Ribosomal protein S20"/>
    <property type="match status" value="1"/>
</dbReference>
<reference key="1">
    <citation type="journal article" date="2006" name="Science">
        <title>A small microbial genome: the end of a long symbiotic relationship?</title>
        <authorList>
            <person name="Perez-Brocal V."/>
            <person name="Gil R."/>
            <person name="Ramos S."/>
            <person name="Lamelas A."/>
            <person name="Postigo M."/>
            <person name="Michelena J.M."/>
            <person name="Silva F.J."/>
            <person name="Moya A."/>
            <person name="Latorre A."/>
        </authorList>
    </citation>
    <scope>NUCLEOTIDE SEQUENCE [LARGE SCALE GENOMIC DNA]</scope>
    <source>
        <strain>Cc</strain>
    </source>
</reference>
<evidence type="ECO:0000255" key="1">
    <source>
        <dbReference type="HAMAP-Rule" id="MF_00500"/>
    </source>
</evidence>
<evidence type="ECO:0000305" key="2"/>
<proteinExistence type="inferred from homology"/>